<name>SEHBP_HUMAN</name>
<sequence length="46" mass="5037">MALRSIKSIAGSCLCSRQRRCGSSAAIFPEGIFRCLSPKFGQEFPE</sequence>
<dbReference type="EMBL" id="AC093249">
    <property type="status" value="NOT_ANNOTATED_CDS"/>
    <property type="molecule type" value="Genomic_DNA"/>
</dbReference>
<dbReference type="AGR" id="HGNC:25173"/>
<dbReference type="GeneCards" id="ZNF689"/>
<dbReference type="HGNC" id="HGNC:25173">
    <property type="gene designation" value="ZNF689"/>
</dbReference>
<dbReference type="HPA" id="ENSG00000289491">
    <property type="expression patterns" value="Tissue enhanced (adipose tissue, choroid plexus, intestine, lymphoid tissue, skeletal muscle)"/>
</dbReference>
<dbReference type="neXtProt" id="NX_C0HLU2"/>
<dbReference type="OrthoDB" id="6077919at2759"/>
<dbReference type="Proteomes" id="UP000005640">
    <property type="component" value="Unplaced"/>
</dbReference>
<dbReference type="GO" id="GO:0005737">
    <property type="term" value="C:cytoplasm"/>
    <property type="evidence" value="ECO:0000314"/>
    <property type="project" value="UniProtKB"/>
</dbReference>
<dbReference type="GO" id="GO:0005634">
    <property type="term" value="C:nucleus"/>
    <property type="evidence" value="ECO:0000314"/>
    <property type="project" value="UniProtKB"/>
</dbReference>
<dbReference type="GO" id="GO:0042393">
    <property type="term" value="F:histone binding"/>
    <property type="evidence" value="ECO:0000314"/>
    <property type="project" value="UniProtKB"/>
</dbReference>
<dbReference type="GO" id="GO:0006357">
    <property type="term" value="P:regulation of transcription by RNA polymerase II"/>
    <property type="evidence" value="ECO:0000314"/>
    <property type="project" value="UniProtKB"/>
</dbReference>
<dbReference type="InterPro" id="IPR054150">
    <property type="entry name" value="SEHBP"/>
</dbReference>
<dbReference type="Pfam" id="PF21978">
    <property type="entry name" value="SEHBP"/>
    <property type="match status" value="1"/>
</dbReference>
<organism>
    <name type="scientific">Homo sapiens</name>
    <name type="common">Human</name>
    <dbReference type="NCBI Taxonomy" id="9606"/>
    <lineage>
        <taxon>Eukaryota</taxon>
        <taxon>Metazoa</taxon>
        <taxon>Chordata</taxon>
        <taxon>Craniata</taxon>
        <taxon>Vertebrata</taxon>
        <taxon>Euteleostomi</taxon>
        <taxon>Mammalia</taxon>
        <taxon>Eutheria</taxon>
        <taxon>Euarchontoglires</taxon>
        <taxon>Primates</taxon>
        <taxon>Haplorrhini</taxon>
        <taxon>Catarrhini</taxon>
        <taxon>Hominidae</taxon>
        <taxon>Homo</taxon>
    </lineage>
</organism>
<keyword id="KW-0963">Cytoplasm</keyword>
<keyword id="KW-0539">Nucleus</keyword>
<keyword id="KW-1185">Reference proteome</keyword>
<keyword id="KW-0804">Transcription</keyword>
<keyword id="KW-0805">Transcription regulation</keyword>
<reference evidence="3" key="1">
    <citation type="journal article" date="2004" name="Nature">
        <title>The sequence and analysis of duplication-rich human chromosome 16.</title>
        <authorList>
            <person name="Martin J."/>
            <person name="Han C."/>
            <person name="Gordon L.A."/>
            <person name="Terry A."/>
            <person name="Prabhakar S."/>
            <person name="She X."/>
            <person name="Xie G."/>
            <person name="Hellsten U."/>
            <person name="Chan Y.M."/>
            <person name="Altherr M."/>
            <person name="Couronne O."/>
            <person name="Aerts A."/>
            <person name="Bajorek E."/>
            <person name="Black S."/>
            <person name="Blumer H."/>
            <person name="Branscomb E."/>
            <person name="Brown N.C."/>
            <person name="Bruno W.J."/>
            <person name="Buckingham J.M."/>
            <person name="Callen D.F."/>
            <person name="Campbell C.S."/>
            <person name="Campbell M.L."/>
            <person name="Campbell E.W."/>
            <person name="Caoile C."/>
            <person name="Challacombe J.F."/>
            <person name="Chasteen L.A."/>
            <person name="Chertkov O."/>
            <person name="Chi H.C."/>
            <person name="Christensen M."/>
            <person name="Clark L.M."/>
            <person name="Cohn J.D."/>
            <person name="Denys M."/>
            <person name="Detter J.C."/>
            <person name="Dickson M."/>
            <person name="Dimitrijevic-Bussod M."/>
            <person name="Escobar J."/>
            <person name="Fawcett J.J."/>
            <person name="Flowers D."/>
            <person name="Fotopulos D."/>
            <person name="Glavina T."/>
            <person name="Gomez M."/>
            <person name="Gonzales E."/>
            <person name="Goodstein D."/>
            <person name="Goodwin L.A."/>
            <person name="Grady D.L."/>
            <person name="Grigoriev I."/>
            <person name="Groza M."/>
            <person name="Hammon N."/>
            <person name="Hawkins T."/>
            <person name="Haydu L."/>
            <person name="Hildebrand C.E."/>
            <person name="Huang W."/>
            <person name="Israni S."/>
            <person name="Jett J."/>
            <person name="Jewett P.B."/>
            <person name="Kadner K."/>
            <person name="Kimball H."/>
            <person name="Kobayashi A."/>
            <person name="Krawczyk M.-C."/>
            <person name="Leyba T."/>
            <person name="Longmire J.L."/>
            <person name="Lopez F."/>
            <person name="Lou Y."/>
            <person name="Lowry S."/>
            <person name="Ludeman T."/>
            <person name="Manohar C.F."/>
            <person name="Mark G.A."/>
            <person name="McMurray K.L."/>
            <person name="Meincke L.J."/>
            <person name="Morgan J."/>
            <person name="Moyzis R.K."/>
            <person name="Mundt M.O."/>
            <person name="Munk A.C."/>
            <person name="Nandkeshwar R.D."/>
            <person name="Pitluck S."/>
            <person name="Pollard M."/>
            <person name="Predki P."/>
            <person name="Parson-Quintana B."/>
            <person name="Ramirez L."/>
            <person name="Rash S."/>
            <person name="Retterer J."/>
            <person name="Ricke D.O."/>
            <person name="Robinson D.L."/>
            <person name="Rodriguez A."/>
            <person name="Salamov A."/>
            <person name="Saunders E.H."/>
            <person name="Scott D."/>
            <person name="Shough T."/>
            <person name="Stallings R.L."/>
            <person name="Stalvey M."/>
            <person name="Sutherland R.D."/>
            <person name="Tapia R."/>
            <person name="Tesmer J.G."/>
            <person name="Thayer N."/>
            <person name="Thompson L.S."/>
            <person name="Tice H."/>
            <person name="Torney D.C."/>
            <person name="Tran-Gyamfi M."/>
            <person name="Tsai M."/>
            <person name="Ulanovsky L.E."/>
            <person name="Ustaszewska A."/>
            <person name="Vo N."/>
            <person name="White P.S."/>
            <person name="Williams A.L."/>
            <person name="Wills P.L."/>
            <person name="Wu J.-R."/>
            <person name="Wu K."/>
            <person name="Yang J."/>
            <person name="DeJong P."/>
            <person name="Bruce D."/>
            <person name="Doggett N.A."/>
            <person name="Deaven L."/>
            <person name="Schmutz J."/>
            <person name="Grimwood J."/>
            <person name="Richardson P."/>
            <person name="Rokhsar D.S."/>
            <person name="Eichler E.E."/>
            <person name="Gilna P."/>
            <person name="Lucas S.M."/>
            <person name="Myers R.M."/>
            <person name="Rubin E.M."/>
            <person name="Pennacchio L.A."/>
        </authorList>
    </citation>
    <scope>NUCLEOTIDE SEQUENCE [LARGE SCALE GENOMIC DNA]</scope>
</reference>
<reference evidence="3" key="2">
    <citation type="journal article" date="2021" name="Proc. Natl. Acad. Sci. U.S.A.">
        <title>A short ORF-encoded transcriptional regulator.</title>
        <authorList>
            <person name="Koh M."/>
            <person name="Ahmad I."/>
            <person name="Ko Y."/>
            <person name="Zhang Y."/>
            <person name="Martinez T.F."/>
            <person name="Diedrich J.K."/>
            <person name="Chu Q."/>
            <person name="Moresco J.J."/>
            <person name="Erb M.A."/>
            <person name="Saghatelian A."/>
            <person name="Schultz P.G."/>
            <person name="Bollong M.J."/>
        </authorList>
    </citation>
    <scope>IDENTIFICATION</scope>
    <scope>FUNCTION</scope>
    <scope>INTERACTION WITH HISTONE H2B; HMGN1 AND HMGN3</scope>
    <scope>SUBCELLULAR LOCATION</scope>
</reference>
<accession>C0HLU2</accession>
<comment type="function">
    <text evidence="1">Plays a role in transcription regulation.</text>
</comment>
<comment type="subunit">
    <text evidence="1">Interacts with histone H2B (PubMed:33468658). Also interacts with chromatin-binding proteins HMGN1 and HMGN3 (PubMed:33468658).</text>
</comment>
<comment type="subcellular location">
    <subcellularLocation>
        <location evidence="1">Nucleus</location>
    </subcellularLocation>
    <subcellularLocation>
        <location evidence="1">Cytoplasm</location>
    </subcellularLocation>
</comment>
<comment type="miscellaneous">
    <text evidence="1">Encoded in the 5'-untranslated region (5'-UTR) of ZNF689.</text>
</comment>
<protein>
    <recommendedName>
        <fullName evidence="3">Transcriptional regulator SEHBP</fullName>
    </recommendedName>
    <alternativeName>
        <fullName evidence="2">Short ORF-encoded histone-binding protein</fullName>
    </alternativeName>
    <alternativeName>
        <fullName evidence="3">ZNF689 upstream open reading frame protein</fullName>
    </alternativeName>
</protein>
<feature type="chain" id="PRO_0000453426" description="Transcriptional regulator SEHBP">
    <location>
        <begin position="1"/>
        <end position="46"/>
    </location>
</feature>
<gene>
    <name evidence="2" type="primary">ZNF689</name>
</gene>
<proteinExistence type="evidence at protein level"/>
<evidence type="ECO:0000269" key="1">
    <source>
    </source>
</evidence>
<evidence type="ECO:0000303" key="2">
    <source>
    </source>
</evidence>
<evidence type="ECO:0000305" key="3"/>